<comment type="function">
    <text evidence="1">May be involved in protection from oxidative damage.</text>
</comment>
<comment type="subcellular location">
    <subcellularLocation>
        <location evidence="1">Mitochondrion</location>
    </subcellularLocation>
</comment>
<comment type="similarity">
    <text evidence="4">Belongs to the OXR1 family.</text>
</comment>
<organism>
    <name type="scientific">Cryptococcus neoformans var. neoformans serotype D (strain JEC21 / ATCC MYA-565)</name>
    <name type="common">Filobasidiella neoformans</name>
    <dbReference type="NCBI Taxonomy" id="214684"/>
    <lineage>
        <taxon>Eukaryota</taxon>
        <taxon>Fungi</taxon>
        <taxon>Dikarya</taxon>
        <taxon>Basidiomycota</taxon>
        <taxon>Agaricomycotina</taxon>
        <taxon>Tremellomycetes</taxon>
        <taxon>Tremellales</taxon>
        <taxon>Cryptococcaceae</taxon>
        <taxon>Cryptococcus</taxon>
        <taxon>Cryptococcus neoformans species complex</taxon>
    </lineage>
</organism>
<evidence type="ECO:0000250" key="1"/>
<evidence type="ECO:0000255" key="2">
    <source>
        <dbReference type="PROSITE-ProRule" id="PRU01234"/>
    </source>
</evidence>
<evidence type="ECO:0000256" key="3">
    <source>
        <dbReference type="SAM" id="MobiDB-lite"/>
    </source>
</evidence>
<evidence type="ECO:0000305" key="4"/>
<protein>
    <recommendedName>
        <fullName>Oxidation resistance protein 1</fullName>
    </recommendedName>
</protein>
<proteinExistence type="inferred from homology"/>
<reference key="1">
    <citation type="journal article" date="2005" name="Science">
        <title>The genome of the basidiomycetous yeast and human pathogen Cryptococcus neoformans.</title>
        <authorList>
            <person name="Loftus B.J."/>
            <person name="Fung E."/>
            <person name="Roncaglia P."/>
            <person name="Rowley D."/>
            <person name="Amedeo P."/>
            <person name="Bruno D."/>
            <person name="Vamathevan J."/>
            <person name="Miranda M."/>
            <person name="Anderson I.J."/>
            <person name="Fraser J.A."/>
            <person name="Allen J.E."/>
            <person name="Bosdet I.E."/>
            <person name="Brent M.R."/>
            <person name="Chiu R."/>
            <person name="Doering T.L."/>
            <person name="Donlin M.J."/>
            <person name="D'Souza C.A."/>
            <person name="Fox D.S."/>
            <person name="Grinberg V."/>
            <person name="Fu J."/>
            <person name="Fukushima M."/>
            <person name="Haas B.J."/>
            <person name="Huang J.C."/>
            <person name="Janbon G."/>
            <person name="Jones S.J.M."/>
            <person name="Koo H.L."/>
            <person name="Krzywinski M.I."/>
            <person name="Kwon-Chung K.J."/>
            <person name="Lengeler K.B."/>
            <person name="Maiti R."/>
            <person name="Marra M.A."/>
            <person name="Marra R.E."/>
            <person name="Mathewson C.A."/>
            <person name="Mitchell T.G."/>
            <person name="Pertea M."/>
            <person name="Riggs F.R."/>
            <person name="Salzberg S.L."/>
            <person name="Schein J.E."/>
            <person name="Shvartsbeyn A."/>
            <person name="Shin H."/>
            <person name="Shumway M."/>
            <person name="Specht C.A."/>
            <person name="Suh B.B."/>
            <person name="Tenney A."/>
            <person name="Utterback T.R."/>
            <person name="Wickes B.L."/>
            <person name="Wortman J.R."/>
            <person name="Wye N.H."/>
            <person name="Kronstad J.W."/>
            <person name="Lodge J.K."/>
            <person name="Heitman J."/>
            <person name="Davis R.W."/>
            <person name="Fraser C.M."/>
            <person name="Hyman R.W."/>
        </authorList>
    </citation>
    <scope>NUCLEOTIDE SEQUENCE [LARGE SCALE GENOMIC DNA]</scope>
    <source>
        <strain>JEC21 / ATCC MYA-565</strain>
    </source>
</reference>
<gene>
    <name type="primary">OXR1</name>
    <name type="ordered locus">CNF03020</name>
</gene>
<name>OXR1_CRYNJ</name>
<accession>P0CP42</accession>
<accession>Q55R20</accession>
<accession>Q5KF46</accession>
<dbReference type="EMBL" id="AE017346">
    <property type="protein sequence ID" value="AAW44068.1"/>
    <property type="molecule type" value="Genomic_DNA"/>
</dbReference>
<dbReference type="RefSeq" id="XP_571375.1">
    <property type="nucleotide sequence ID" value="XM_571375.1"/>
</dbReference>
<dbReference type="SMR" id="P0CP42"/>
<dbReference type="STRING" id="214684.P0CP42"/>
<dbReference type="PaxDb" id="214684-P0CP42"/>
<dbReference type="EnsemblFungi" id="AAW44068">
    <property type="protein sequence ID" value="AAW44068"/>
    <property type="gene ID" value="CNF03020"/>
</dbReference>
<dbReference type="GeneID" id="3258387"/>
<dbReference type="KEGG" id="cne:CNF03020"/>
<dbReference type="VEuPathDB" id="FungiDB:CNF03020"/>
<dbReference type="eggNOG" id="KOG2372">
    <property type="taxonomic scope" value="Eukaryota"/>
</dbReference>
<dbReference type="HOGENOM" id="CLU_593145_0_0_1"/>
<dbReference type="InParanoid" id="P0CP42"/>
<dbReference type="OMA" id="HPPHESE"/>
<dbReference type="OrthoDB" id="26679at2759"/>
<dbReference type="Proteomes" id="UP000002149">
    <property type="component" value="Chromosome 6"/>
</dbReference>
<dbReference type="GO" id="GO:0005739">
    <property type="term" value="C:mitochondrion"/>
    <property type="evidence" value="ECO:0007669"/>
    <property type="project" value="UniProtKB-SubCell"/>
</dbReference>
<dbReference type="GO" id="GO:0005634">
    <property type="term" value="C:nucleus"/>
    <property type="evidence" value="ECO:0000318"/>
    <property type="project" value="GO_Central"/>
</dbReference>
<dbReference type="GO" id="GO:0006979">
    <property type="term" value="P:response to oxidative stress"/>
    <property type="evidence" value="ECO:0000318"/>
    <property type="project" value="GO_Central"/>
</dbReference>
<dbReference type="InterPro" id="IPR006571">
    <property type="entry name" value="TLDc_dom"/>
</dbReference>
<dbReference type="PANTHER" id="PTHR23354:SF62">
    <property type="entry name" value="MUSTARD, ISOFORM V"/>
    <property type="match status" value="1"/>
</dbReference>
<dbReference type="PANTHER" id="PTHR23354">
    <property type="entry name" value="NUCLEOLAR PROTEIN 7/ESTROGEN RECEPTOR COACTIVATOR-RELATED"/>
    <property type="match status" value="1"/>
</dbReference>
<dbReference type="Pfam" id="PF07534">
    <property type="entry name" value="TLD"/>
    <property type="match status" value="1"/>
</dbReference>
<dbReference type="SMART" id="SM00584">
    <property type="entry name" value="TLDc"/>
    <property type="match status" value="1"/>
</dbReference>
<dbReference type="PROSITE" id="PS51886">
    <property type="entry name" value="TLDC"/>
    <property type="match status" value="1"/>
</dbReference>
<feature type="chain" id="PRO_0000058113" description="Oxidation resistance protein 1">
    <location>
        <begin position="1"/>
        <end position="465"/>
    </location>
</feature>
<feature type="domain" description="TLDc" evidence="2">
    <location>
        <begin position="287"/>
        <end position="465"/>
    </location>
</feature>
<feature type="region of interest" description="Disordered" evidence="3">
    <location>
        <begin position="1"/>
        <end position="61"/>
    </location>
</feature>
<feature type="region of interest" description="Disordered" evidence="3">
    <location>
        <begin position="73"/>
        <end position="119"/>
    </location>
</feature>
<feature type="region of interest" description="Disordered" evidence="3">
    <location>
        <begin position="144"/>
        <end position="183"/>
    </location>
</feature>
<feature type="region of interest" description="Disordered" evidence="3">
    <location>
        <begin position="202"/>
        <end position="223"/>
    </location>
</feature>
<feature type="compositionally biased region" description="Polar residues" evidence="3">
    <location>
        <begin position="20"/>
        <end position="32"/>
    </location>
</feature>
<feature type="compositionally biased region" description="Low complexity" evidence="3">
    <location>
        <begin position="103"/>
        <end position="113"/>
    </location>
</feature>
<feature type="compositionally biased region" description="Basic and acidic residues" evidence="3">
    <location>
        <begin position="148"/>
        <end position="162"/>
    </location>
</feature>
<feature type="compositionally biased region" description="Polar residues" evidence="3">
    <location>
        <begin position="165"/>
        <end position="179"/>
    </location>
</feature>
<feature type="compositionally biased region" description="Polar residues" evidence="3">
    <location>
        <begin position="202"/>
        <end position="218"/>
    </location>
</feature>
<sequence length="465" mass="50844">MPHHHSLPTSSADFGDFNSAPASSIQTSSLSQDDLLGSYDETIRHSPSVKSHPSPDPRASNLDLLFLDHNAEEHRRPEPTYSPRSRPTGVLPESVPHARSPRRLSTFSSSTSPTSPPSITDAGCDIIFHPFYDHMDVNATRAMQKMQGHGERGASKRSDKMQLRGQASHSRIAPSSSPPHSRLLDTLATTTKLASKWRSVITHPTSPNTADQTHNGQPKPQIRHAETSPMDITHDTPFASAEQIAGSYIPPTGAPGFTQASVLGMKHHGDGPFEPLTLIGRKDSTSNVLTPEDAIGLKACLPPRQRLTNQWTLLFSLDQHGASLSTLYRLIDIYSVSHQSSGNILVIRDGHGNRFGTYMNEPIVKREGTYYGSGESFLFKLTHSCQTIPYRWTGKNKYFALCEAGFMSFGGGAGAYGLILDSTFTHNSSATCPAYNNDILCELEPLKSQHAQSFQCLGLEVWSTL</sequence>
<keyword id="KW-0496">Mitochondrion</keyword>
<keyword id="KW-1185">Reference proteome</keyword>